<organism>
    <name type="scientific">Macaca fascicularis</name>
    <name type="common">Crab-eating macaque</name>
    <name type="synonym">Cynomolgus monkey</name>
    <dbReference type="NCBI Taxonomy" id="9541"/>
    <lineage>
        <taxon>Eukaryota</taxon>
        <taxon>Metazoa</taxon>
        <taxon>Chordata</taxon>
        <taxon>Craniata</taxon>
        <taxon>Vertebrata</taxon>
        <taxon>Euteleostomi</taxon>
        <taxon>Mammalia</taxon>
        <taxon>Eutheria</taxon>
        <taxon>Euarchontoglires</taxon>
        <taxon>Primates</taxon>
        <taxon>Haplorrhini</taxon>
        <taxon>Catarrhini</taxon>
        <taxon>Cercopithecidae</taxon>
        <taxon>Cercopithecinae</taxon>
        <taxon>Macaca</taxon>
    </lineage>
</organism>
<proteinExistence type="evidence at transcript level"/>
<dbReference type="EMBL" id="AB168880">
    <property type="protein sequence ID" value="BAE00983.1"/>
    <property type="molecule type" value="mRNA"/>
</dbReference>
<dbReference type="RefSeq" id="NP_001270892.1">
    <property type="nucleotide sequence ID" value="NM_001283963.1"/>
</dbReference>
<dbReference type="SMR" id="Q4R7D9"/>
<dbReference type="STRING" id="9541.ENSMFAP00000046072"/>
<dbReference type="GlyCosmos" id="Q4R7D9">
    <property type="glycosylation" value="1 site, No reported glycans"/>
</dbReference>
<dbReference type="eggNOG" id="KOG0183">
    <property type="taxonomic scope" value="Eukaryota"/>
</dbReference>
<dbReference type="Proteomes" id="UP000233100">
    <property type="component" value="Unplaced"/>
</dbReference>
<dbReference type="GO" id="GO:0005737">
    <property type="term" value="C:cytoplasm"/>
    <property type="evidence" value="ECO:0007669"/>
    <property type="project" value="UniProtKB-SubCell"/>
</dbReference>
<dbReference type="GO" id="GO:0005634">
    <property type="term" value="C:nucleus"/>
    <property type="evidence" value="ECO:0007669"/>
    <property type="project" value="UniProtKB-SubCell"/>
</dbReference>
<dbReference type="GO" id="GO:0019773">
    <property type="term" value="C:proteasome core complex, alpha-subunit complex"/>
    <property type="evidence" value="ECO:0000250"/>
    <property type="project" value="UniProtKB"/>
</dbReference>
<dbReference type="GO" id="GO:1990111">
    <property type="term" value="C:spermatoproteasome complex"/>
    <property type="evidence" value="ECO:0000250"/>
    <property type="project" value="UniProtKB"/>
</dbReference>
<dbReference type="GO" id="GO:0006511">
    <property type="term" value="P:ubiquitin-dependent protein catabolic process"/>
    <property type="evidence" value="ECO:0007669"/>
    <property type="project" value="InterPro"/>
</dbReference>
<dbReference type="CDD" id="cd03755">
    <property type="entry name" value="proteasome_alpha_type_7"/>
    <property type="match status" value="1"/>
</dbReference>
<dbReference type="FunFam" id="3.60.20.10:FF:000018">
    <property type="entry name" value="Proteasome subunit alpha type"/>
    <property type="match status" value="1"/>
</dbReference>
<dbReference type="Gene3D" id="3.60.20.10">
    <property type="entry name" value="Glutamine Phosphoribosylpyrophosphate, subunit 1, domain 1"/>
    <property type="match status" value="1"/>
</dbReference>
<dbReference type="InterPro" id="IPR029055">
    <property type="entry name" value="Ntn_hydrolases_N"/>
</dbReference>
<dbReference type="InterPro" id="IPR050115">
    <property type="entry name" value="Proteasome_alpha"/>
</dbReference>
<dbReference type="InterPro" id="IPR023332">
    <property type="entry name" value="Proteasome_alpha-type"/>
</dbReference>
<dbReference type="InterPro" id="IPR000426">
    <property type="entry name" value="Proteasome_asu_N"/>
</dbReference>
<dbReference type="InterPro" id="IPR001353">
    <property type="entry name" value="Proteasome_sua/b"/>
</dbReference>
<dbReference type="NCBIfam" id="NF003075">
    <property type="entry name" value="PRK03996.1"/>
    <property type="match status" value="1"/>
</dbReference>
<dbReference type="PANTHER" id="PTHR11599">
    <property type="entry name" value="PROTEASOME SUBUNIT ALPHA/BETA"/>
    <property type="match status" value="1"/>
</dbReference>
<dbReference type="Pfam" id="PF00227">
    <property type="entry name" value="Proteasome"/>
    <property type="match status" value="1"/>
</dbReference>
<dbReference type="Pfam" id="PF10584">
    <property type="entry name" value="Proteasome_A_N"/>
    <property type="match status" value="1"/>
</dbReference>
<dbReference type="SMART" id="SM00948">
    <property type="entry name" value="Proteasome_A_N"/>
    <property type="match status" value="1"/>
</dbReference>
<dbReference type="SUPFAM" id="SSF56235">
    <property type="entry name" value="N-terminal nucleophile aminohydrolases (Ntn hydrolases)"/>
    <property type="match status" value="1"/>
</dbReference>
<dbReference type="PROSITE" id="PS00388">
    <property type="entry name" value="PROTEASOME_ALPHA_1"/>
    <property type="match status" value="1"/>
</dbReference>
<dbReference type="PROSITE" id="PS51475">
    <property type="entry name" value="PROTEASOME_ALPHA_2"/>
    <property type="match status" value="1"/>
</dbReference>
<reference key="1">
    <citation type="submission" date="2005-06" db="EMBL/GenBank/DDBJ databases">
        <title>DNA sequences of macaque genes expressed in brain or testis and its evolutionary implications.</title>
        <authorList>
            <consortium name="International consortium for macaque cDNA sequencing and analysis"/>
        </authorList>
    </citation>
    <scope>NUCLEOTIDE SEQUENCE [LARGE SCALE MRNA]</scope>
    <source>
        <tissue>Testis</tissue>
    </source>
</reference>
<protein>
    <recommendedName>
        <fullName>Proteasome subunit alpha type-7-like</fullName>
    </recommendedName>
</protein>
<accession>Q4R7D9</accession>
<feature type="chain" id="PRO_0000276764" description="Proteasome subunit alpha type-7-like">
    <location>
        <begin position="1"/>
        <end position="250"/>
    </location>
</feature>
<feature type="glycosylation site" description="O-linked (GlcNAc) serine" evidence="1">
    <location>
        <position position="132"/>
    </location>
</feature>
<gene>
    <name type="primary">PSMA7L</name>
    <name type="ORF">QtsA-15547</name>
</gene>
<keyword id="KW-0963">Cytoplasm</keyword>
<keyword id="KW-0325">Glycoprotein</keyword>
<keyword id="KW-0539">Nucleus</keyword>
<keyword id="KW-0647">Proteasome</keyword>
<keyword id="KW-1185">Reference proteome</keyword>
<sequence>MASRYDRAITVFSPDGHLFQVEYAQEAVKKGSTAVGIRGTNIVVLGVEKKSVAKLQDERTVRKICALDDHVCMAFAGLTADARVVINRARVECQSHKLTVEDPVTVEYITRFIATLKQKYTQSNGRRPFGISALIVGFDDDGIPRLYQTDPSGTYHAWKANAIGRSAKTVREFLEKNYTEDAIASDNEAIKLAIKALLEVVQSGGKNIELAIIRRNQPLKMFSAKEVELYVTEIEKEKEEAEKKKSKKSV</sequence>
<name>PSA7L_MACFA</name>
<comment type="function">
    <text evidence="2">Component of the 20S core proteasome complex involved in the proteolytic degradation of most intracellular proteins. This complex plays numerous essential roles within the cell by associating with different regulatory particles. Associated with two 19S regulatory particles, forms the 26S proteasome and thus participates in the ATP-dependent degradation of ubiquitinated proteins. The 26S proteasome plays a key role in the maintenance of protein homeostasis by removing misfolded or damaged proteins that could impair cellular functions, and by removing proteins whose functions are no longer required. Associated with the PA200 or PA28, the 20S proteasome mediates ubiquitin-independent protein degradation. This type of proteolysis is required in several pathways including spermatogenesis (20S-PA200 complex) or generation of a subset of MHC class I-presented antigenic peptides (20S-PA28 complex). Inhibits the transactivation function of HIF-1A under both normoxic and hypoxia-mimicking conditions. The interaction with EMAP2 increases the proteasome-mediated HIF-1A degradation under the hypoxic conditions. Plays a role in hepatitis C virus internal ribosome entry site-mediated translation. Mediates nuclear translocation of the androgen receptor (AR) and thereby enhances androgen-mediated transactivation. Promotes MAVS degradation and thereby negatively regulates MAVS-mediated innate immune response.</text>
</comment>
<comment type="subunit">
    <text evidence="2">The 26S proteasome consists of a 20S proteasome core and two 19S regulatory subunits. The 20S proteasome core is a barrel-shaped complex made of 28 subunits that are arranged in four stacked rings. The two outer rings are each formed by seven alpha subunits, and the two inner rings are formed by seven beta subunits. The proteolytic activity is exerted by three beta-subunits PSMB5, PSMB6 and PSMB7. PSMA7 interacts directly with the PSMG1-PSMG2 heterodimer which promotes 20S proteasome assembly. Interacts with HIF1A. Interacts with RAB7A. Interacts with PRKN. Interacts with ABL1 and ABL2. Interacts with EMAP2. Interacts with MAVS.</text>
</comment>
<comment type="subcellular location">
    <subcellularLocation>
        <location evidence="1">Cytoplasm</location>
    </subcellularLocation>
    <subcellularLocation>
        <location evidence="1">Nucleus</location>
    </subcellularLocation>
</comment>
<comment type="similarity">
    <text evidence="3">Belongs to the peptidase T1A family.</text>
</comment>
<evidence type="ECO:0000250" key="1"/>
<evidence type="ECO:0000250" key="2">
    <source>
        <dbReference type="UniProtKB" id="O14818"/>
    </source>
</evidence>
<evidence type="ECO:0000255" key="3">
    <source>
        <dbReference type="PROSITE-ProRule" id="PRU00808"/>
    </source>
</evidence>